<name>NACA_ASPOR</name>
<comment type="function">
    <text evidence="1">Component of the nascent polypeptide-associated complex (NAC), a dynamic component of the ribosomal exit tunnel, protecting the emerging polypeptides from interaction with other cytoplasmic proteins to ensure appropriate nascent protein targeting. The NAC complex also promotes mitochondrial protein import by enhancing productive ribosome interactions with the outer mitochondrial membrane and blocks the inappropriate interaction of ribosomes translating non-secretory nascent polypeptides with translocation sites in the membrane of the endoplasmic reticulum. Egd2 may also be involved in transcription regulation (By similarity).</text>
</comment>
<comment type="subunit">
    <text evidence="1">Part of the nascent polypeptide-associated complex (NAC), consisting of egd2 and egd1. NAC associates with ribosomes via egd1 (By similarity).</text>
</comment>
<comment type="subcellular location">
    <subcellularLocation>
        <location evidence="1">Cytoplasm</location>
    </subcellularLocation>
    <subcellularLocation>
        <location evidence="1">Nucleus</location>
    </subcellularLocation>
    <text evidence="1">Predominantly cytoplasmic, may also transiently localize to the nucleus.</text>
</comment>
<comment type="similarity">
    <text evidence="4">Belongs to the NAC-alpha family.</text>
</comment>
<sequence>MADPRVEEIVEEETPKQTVEDAGSDSESEAGEANIPAGAAVTIHSRNEKKARKAIGKLGLKHVPGITRVTLRRPKNILFVINQPDVYRSPSSNTWIIFGEAKIEDLNSQAQASAAQQLAAAEAAAGEHAGHDHEHDLGTKVPEAETKKEEEEDDGEPVDESGLEAKDIELVMAQANVSRKKAVKALRENDNDIVNSIMALSI</sequence>
<feature type="chain" id="PRO_0000273481" description="Nascent polypeptide-associated complex subunit alpha">
    <location>
        <begin position="1"/>
        <end position="202"/>
    </location>
</feature>
<feature type="domain" description="NAC-A/B" evidence="2">
    <location>
        <begin position="45"/>
        <end position="110"/>
    </location>
</feature>
<feature type="domain" description="UBA">
    <location>
        <begin position="163"/>
        <end position="202"/>
    </location>
</feature>
<feature type="region of interest" description="Disordered" evidence="3">
    <location>
        <begin position="1"/>
        <end position="41"/>
    </location>
</feature>
<feature type="region of interest" description="Disordered" evidence="3">
    <location>
        <begin position="117"/>
        <end position="165"/>
    </location>
</feature>
<feature type="compositionally biased region" description="Basic and acidic residues" evidence="3">
    <location>
        <begin position="1"/>
        <end position="19"/>
    </location>
</feature>
<feature type="compositionally biased region" description="Low complexity" evidence="3">
    <location>
        <begin position="117"/>
        <end position="127"/>
    </location>
</feature>
<feature type="compositionally biased region" description="Basic and acidic residues" evidence="3">
    <location>
        <begin position="128"/>
        <end position="149"/>
    </location>
</feature>
<feature type="compositionally biased region" description="Acidic residues" evidence="3">
    <location>
        <begin position="150"/>
        <end position="162"/>
    </location>
</feature>
<accession>Q2U955</accession>
<evidence type="ECO:0000250" key="1"/>
<evidence type="ECO:0000255" key="2">
    <source>
        <dbReference type="PROSITE-ProRule" id="PRU00507"/>
    </source>
</evidence>
<evidence type="ECO:0000256" key="3">
    <source>
        <dbReference type="SAM" id="MobiDB-lite"/>
    </source>
</evidence>
<evidence type="ECO:0000305" key="4"/>
<reference key="1">
    <citation type="journal article" date="2005" name="Nature">
        <title>Genome sequencing and analysis of Aspergillus oryzae.</title>
        <authorList>
            <person name="Machida M."/>
            <person name="Asai K."/>
            <person name="Sano M."/>
            <person name="Tanaka T."/>
            <person name="Kumagai T."/>
            <person name="Terai G."/>
            <person name="Kusumoto K."/>
            <person name="Arima T."/>
            <person name="Akita O."/>
            <person name="Kashiwagi Y."/>
            <person name="Abe K."/>
            <person name="Gomi K."/>
            <person name="Horiuchi H."/>
            <person name="Kitamoto K."/>
            <person name="Kobayashi T."/>
            <person name="Takeuchi M."/>
            <person name="Denning D.W."/>
            <person name="Galagan J.E."/>
            <person name="Nierman W.C."/>
            <person name="Yu J."/>
            <person name="Archer D.B."/>
            <person name="Bennett J.W."/>
            <person name="Bhatnagar D."/>
            <person name="Cleveland T.E."/>
            <person name="Fedorova N.D."/>
            <person name="Gotoh O."/>
            <person name="Horikawa H."/>
            <person name="Hosoyama A."/>
            <person name="Ichinomiya M."/>
            <person name="Igarashi R."/>
            <person name="Iwashita K."/>
            <person name="Juvvadi P.R."/>
            <person name="Kato M."/>
            <person name="Kato Y."/>
            <person name="Kin T."/>
            <person name="Kokubun A."/>
            <person name="Maeda H."/>
            <person name="Maeyama N."/>
            <person name="Maruyama J."/>
            <person name="Nagasaki H."/>
            <person name="Nakajima T."/>
            <person name="Oda K."/>
            <person name="Okada K."/>
            <person name="Paulsen I."/>
            <person name="Sakamoto K."/>
            <person name="Sawano T."/>
            <person name="Takahashi M."/>
            <person name="Takase K."/>
            <person name="Terabayashi Y."/>
            <person name="Wortman J.R."/>
            <person name="Yamada O."/>
            <person name="Yamagata Y."/>
            <person name="Anazawa H."/>
            <person name="Hata Y."/>
            <person name="Koide Y."/>
            <person name="Komori T."/>
            <person name="Koyama Y."/>
            <person name="Minetoki T."/>
            <person name="Suharnan S."/>
            <person name="Tanaka A."/>
            <person name="Isono K."/>
            <person name="Kuhara S."/>
            <person name="Ogasawara N."/>
            <person name="Kikuchi H."/>
        </authorList>
    </citation>
    <scope>NUCLEOTIDE SEQUENCE [LARGE SCALE GENOMIC DNA]</scope>
    <source>
        <strain>ATCC 42149 / RIB 40</strain>
    </source>
</reference>
<proteinExistence type="inferred from homology"/>
<gene>
    <name type="primary">egd2</name>
    <name type="ORF">AO090701000167</name>
</gene>
<keyword id="KW-0963">Cytoplasm</keyword>
<keyword id="KW-0539">Nucleus</keyword>
<keyword id="KW-0653">Protein transport</keyword>
<keyword id="KW-1185">Reference proteome</keyword>
<keyword id="KW-0813">Transport</keyword>
<protein>
    <recommendedName>
        <fullName>Nascent polypeptide-associated complex subunit alpha</fullName>
        <shortName>NAC-alpha</shortName>
    </recommendedName>
    <alternativeName>
        <fullName>Alpha-NAC</fullName>
    </alternativeName>
</protein>
<dbReference type="EMBL" id="BA000053">
    <property type="protein sequence ID" value="BAE61910.1"/>
    <property type="molecule type" value="Genomic_DNA"/>
</dbReference>
<dbReference type="RefSeq" id="XP_001823043.1">
    <property type="nucleotide sequence ID" value="XM_001822991.2"/>
</dbReference>
<dbReference type="SMR" id="Q2U955"/>
<dbReference type="STRING" id="510516.Q2U955"/>
<dbReference type="EnsemblFungi" id="BAE61910">
    <property type="protein sequence ID" value="BAE61910"/>
    <property type="gene ID" value="AO090701000167"/>
</dbReference>
<dbReference type="GeneID" id="5995100"/>
<dbReference type="KEGG" id="aor:AO090701000167"/>
<dbReference type="VEuPathDB" id="FungiDB:AO090701000167"/>
<dbReference type="HOGENOM" id="CLU_057806_2_0_1"/>
<dbReference type="OMA" id="SQKMIFA"/>
<dbReference type="OrthoDB" id="129783at5052"/>
<dbReference type="Proteomes" id="UP000006564">
    <property type="component" value="Chromosome 5"/>
</dbReference>
<dbReference type="GO" id="GO:0005854">
    <property type="term" value="C:nascent polypeptide-associated complex"/>
    <property type="evidence" value="ECO:0007669"/>
    <property type="project" value="EnsemblFungi"/>
</dbReference>
<dbReference type="GO" id="GO:0005634">
    <property type="term" value="C:nucleus"/>
    <property type="evidence" value="ECO:0007669"/>
    <property type="project" value="UniProtKB-SubCell"/>
</dbReference>
<dbReference type="GO" id="GO:0015031">
    <property type="term" value="P:protein transport"/>
    <property type="evidence" value="ECO:0007669"/>
    <property type="project" value="UniProtKB-KW"/>
</dbReference>
<dbReference type="CDD" id="cd22054">
    <property type="entry name" value="NAC_NACA"/>
    <property type="match status" value="1"/>
</dbReference>
<dbReference type="CDD" id="cd14358">
    <property type="entry name" value="UBA_NAC_euk"/>
    <property type="match status" value="1"/>
</dbReference>
<dbReference type="FunFam" id="2.20.70.30:FF:000002">
    <property type="entry name" value="Nascent polypeptide-associated complex (NAC), alpha subunit"/>
    <property type="match status" value="1"/>
</dbReference>
<dbReference type="FunFam" id="1.10.8.10:FF:000006">
    <property type="entry name" value="Putative nascent polypeptide-associated complex subunit alpha"/>
    <property type="match status" value="1"/>
</dbReference>
<dbReference type="Gene3D" id="1.10.8.10">
    <property type="entry name" value="DNA helicase RuvA subunit, C-terminal domain"/>
    <property type="match status" value="1"/>
</dbReference>
<dbReference type="Gene3D" id="2.20.70.30">
    <property type="entry name" value="Nascent polypeptide-associated complex domain"/>
    <property type="match status" value="1"/>
</dbReference>
<dbReference type="InterPro" id="IPR016641">
    <property type="entry name" value="EGD2/NACA0like"/>
</dbReference>
<dbReference type="InterPro" id="IPR044034">
    <property type="entry name" value="NAC-like_UBA"/>
</dbReference>
<dbReference type="InterPro" id="IPR038187">
    <property type="entry name" value="NAC_A/B_dom_sf"/>
</dbReference>
<dbReference type="InterPro" id="IPR002715">
    <property type="entry name" value="Nas_poly-pep-assoc_cplx_dom"/>
</dbReference>
<dbReference type="PANTHER" id="PTHR21713">
    <property type="entry name" value="NASCENT POLYPEPTIDE ASSOCIATED COMPLEX ALPHA SUBUNIT-RELATED"/>
    <property type="match status" value="1"/>
</dbReference>
<dbReference type="Pfam" id="PF01849">
    <property type="entry name" value="NAC"/>
    <property type="match status" value="1"/>
</dbReference>
<dbReference type="Pfam" id="PF19026">
    <property type="entry name" value="UBA_HYPK"/>
    <property type="match status" value="1"/>
</dbReference>
<dbReference type="PIRSF" id="PIRSF015901">
    <property type="entry name" value="NAC_alpha"/>
    <property type="match status" value="1"/>
</dbReference>
<dbReference type="SMART" id="SM01407">
    <property type="entry name" value="NAC"/>
    <property type="match status" value="1"/>
</dbReference>
<dbReference type="PROSITE" id="PS51151">
    <property type="entry name" value="NAC_AB"/>
    <property type="match status" value="1"/>
</dbReference>
<organism>
    <name type="scientific">Aspergillus oryzae (strain ATCC 42149 / RIB 40)</name>
    <name type="common">Yellow koji mold</name>
    <dbReference type="NCBI Taxonomy" id="510516"/>
    <lineage>
        <taxon>Eukaryota</taxon>
        <taxon>Fungi</taxon>
        <taxon>Dikarya</taxon>
        <taxon>Ascomycota</taxon>
        <taxon>Pezizomycotina</taxon>
        <taxon>Eurotiomycetes</taxon>
        <taxon>Eurotiomycetidae</taxon>
        <taxon>Eurotiales</taxon>
        <taxon>Aspergillaceae</taxon>
        <taxon>Aspergillus</taxon>
        <taxon>Aspergillus subgen. Circumdati</taxon>
    </lineage>
</organism>